<comment type="function">
    <text>Carrier of the growing fatty acid chain in fatty acid biosynthesis.</text>
</comment>
<comment type="pathway">
    <text evidence="1">Lipid metabolism; fatty acid biosynthesis.</text>
</comment>
<comment type="subcellular location">
    <subcellularLocation>
        <location evidence="1">Cytoplasm</location>
    </subcellularLocation>
</comment>
<comment type="PTM">
    <text>4'-phosphopantetheine is transferred from CoA to a specific serine of apo-ACP by AcpS. This modification is essential for activity because fatty acids are bound in thioester linkage to the sulfhydryl of the prosthetic group.</text>
</comment>
<comment type="similarity">
    <text evidence="1">Belongs to the acyl carrier protein (ACP) family.</text>
</comment>
<reference key="1">
    <citation type="journal article" date="1997" name="J. Bacteriol.">
        <title>Domains of Escherichia coli acyl carrier protein important for membrane-derived-oligosaccharide biosynthesis.</title>
        <authorList>
            <person name="Tang L."/>
            <person name="Weissborn A.C."/>
            <person name="Kennedy E.P."/>
        </authorList>
    </citation>
    <scope>PROTEIN SEQUENCE OF 2-77</scope>
    <scope>PHOSPHOPANTETHEINYLATION AT SER-37</scope>
    <source>
        <strain>ATCC 11336 / DSM 6292 / CIP 103374 / LMG 5214 / NBRC 15448 / NCIMB 56 / VKM B-1416</strain>
    </source>
</reference>
<name>ACP_OCELI</name>
<gene>
    <name evidence="1" type="primary">acpP</name>
</gene>
<proteinExistence type="evidence at protein level"/>
<evidence type="ECO:0000255" key="1">
    <source>
        <dbReference type="HAMAP-Rule" id="MF_01217"/>
    </source>
</evidence>
<evidence type="ECO:0000255" key="2">
    <source>
        <dbReference type="PROSITE-ProRule" id="PRU00258"/>
    </source>
</evidence>
<evidence type="ECO:0000269" key="3">
    <source>
    </source>
</evidence>
<feature type="initiator methionine" description="Removed" evidence="3">
    <location>
        <position position="1"/>
    </location>
</feature>
<feature type="chain" id="PRO_0000180159" description="Acyl carrier protein">
    <location>
        <begin position="2"/>
        <end position="77"/>
    </location>
</feature>
<feature type="domain" description="Carrier" evidence="2">
    <location>
        <begin position="2"/>
        <end position="77"/>
    </location>
</feature>
<feature type="modified residue" description="O-(pantetheine 4'-phosphoryl)serine" evidence="2 3">
    <location>
        <position position="37"/>
    </location>
</feature>
<sequence length="77" mass="8631">MSTIEERVKKIVSEQLGVKEEEITNASSFVDDLGADSLDTVELVMALEEEFETEIPDEEAEKITTVQEAIDYVVSHQ</sequence>
<keyword id="KW-0963">Cytoplasm</keyword>
<keyword id="KW-0903">Direct protein sequencing</keyword>
<keyword id="KW-0275">Fatty acid biosynthesis</keyword>
<keyword id="KW-0276">Fatty acid metabolism</keyword>
<keyword id="KW-0444">Lipid biosynthesis</keyword>
<keyword id="KW-0443">Lipid metabolism</keyword>
<keyword id="KW-0596">Phosphopantetheine</keyword>
<keyword id="KW-0597">Phosphoprotein</keyword>
<accession>P80922</accession>
<dbReference type="RefSeq" id="WP_077242679.1">
    <property type="nucleotide sequence ID" value="NZ_MTSD02000001.1"/>
</dbReference>
<dbReference type="SMR" id="P80922"/>
<dbReference type="STRING" id="966.BTA35_0201630"/>
<dbReference type="UniPathway" id="UPA00094"/>
<dbReference type="GO" id="GO:0005829">
    <property type="term" value="C:cytosol"/>
    <property type="evidence" value="ECO:0007669"/>
    <property type="project" value="TreeGrafter"/>
</dbReference>
<dbReference type="GO" id="GO:0016020">
    <property type="term" value="C:membrane"/>
    <property type="evidence" value="ECO:0007669"/>
    <property type="project" value="GOC"/>
</dbReference>
<dbReference type="GO" id="GO:0000035">
    <property type="term" value="F:acyl binding"/>
    <property type="evidence" value="ECO:0007669"/>
    <property type="project" value="TreeGrafter"/>
</dbReference>
<dbReference type="GO" id="GO:0000036">
    <property type="term" value="F:acyl carrier activity"/>
    <property type="evidence" value="ECO:0007669"/>
    <property type="project" value="UniProtKB-UniRule"/>
</dbReference>
<dbReference type="GO" id="GO:0009245">
    <property type="term" value="P:lipid A biosynthetic process"/>
    <property type="evidence" value="ECO:0007669"/>
    <property type="project" value="TreeGrafter"/>
</dbReference>
<dbReference type="FunFam" id="1.10.1200.10:FF:000001">
    <property type="entry name" value="Acyl carrier protein"/>
    <property type="match status" value="1"/>
</dbReference>
<dbReference type="Gene3D" id="1.10.1200.10">
    <property type="entry name" value="ACP-like"/>
    <property type="match status" value="1"/>
</dbReference>
<dbReference type="HAMAP" id="MF_01217">
    <property type="entry name" value="Acyl_carrier"/>
    <property type="match status" value="1"/>
</dbReference>
<dbReference type="InterPro" id="IPR003231">
    <property type="entry name" value="ACP"/>
</dbReference>
<dbReference type="InterPro" id="IPR036736">
    <property type="entry name" value="ACP-like_sf"/>
</dbReference>
<dbReference type="InterPro" id="IPR009081">
    <property type="entry name" value="PP-bd_ACP"/>
</dbReference>
<dbReference type="InterPro" id="IPR006162">
    <property type="entry name" value="Ppantetheine_attach_site"/>
</dbReference>
<dbReference type="NCBIfam" id="TIGR00517">
    <property type="entry name" value="acyl_carrier"/>
    <property type="match status" value="1"/>
</dbReference>
<dbReference type="NCBIfam" id="NF002148">
    <property type="entry name" value="PRK00982.1-2"/>
    <property type="match status" value="1"/>
</dbReference>
<dbReference type="NCBIfam" id="NF002149">
    <property type="entry name" value="PRK00982.1-3"/>
    <property type="match status" value="1"/>
</dbReference>
<dbReference type="NCBIfam" id="NF002150">
    <property type="entry name" value="PRK00982.1-4"/>
    <property type="match status" value="1"/>
</dbReference>
<dbReference type="NCBIfam" id="NF002151">
    <property type="entry name" value="PRK00982.1-5"/>
    <property type="match status" value="1"/>
</dbReference>
<dbReference type="PANTHER" id="PTHR20863">
    <property type="entry name" value="ACYL CARRIER PROTEIN"/>
    <property type="match status" value="1"/>
</dbReference>
<dbReference type="PANTHER" id="PTHR20863:SF76">
    <property type="entry name" value="CARRIER DOMAIN-CONTAINING PROTEIN"/>
    <property type="match status" value="1"/>
</dbReference>
<dbReference type="Pfam" id="PF00550">
    <property type="entry name" value="PP-binding"/>
    <property type="match status" value="1"/>
</dbReference>
<dbReference type="SUPFAM" id="SSF47336">
    <property type="entry name" value="ACP-like"/>
    <property type="match status" value="1"/>
</dbReference>
<dbReference type="PROSITE" id="PS50075">
    <property type="entry name" value="CARRIER"/>
    <property type="match status" value="1"/>
</dbReference>
<dbReference type="PROSITE" id="PS00012">
    <property type="entry name" value="PHOSPHOPANTETHEINE"/>
    <property type="match status" value="1"/>
</dbReference>
<organism>
    <name type="scientific">Oceanospirillum linum</name>
    <dbReference type="NCBI Taxonomy" id="966"/>
    <lineage>
        <taxon>Bacteria</taxon>
        <taxon>Pseudomonadati</taxon>
        <taxon>Pseudomonadota</taxon>
        <taxon>Gammaproteobacteria</taxon>
        <taxon>Oceanospirillales</taxon>
        <taxon>Oceanospirillaceae</taxon>
        <taxon>Oceanospirillum</taxon>
    </lineage>
</organism>
<protein>
    <recommendedName>
        <fullName evidence="1">Acyl carrier protein</fullName>
        <shortName evidence="1">ACP</shortName>
    </recommendedName>
</protein>